<keyword id="KW-0324">Glycolysis</keyword>
<keyword id="KW-0413">Isomerase</keyword>
<keyword id="KW-0464">Manganese</keyword>
<keyword id="KW-0479">Metal-binding</keyword>
<comment type="function">
    <text evidence="1">Catalyzes the interconversion of 2-phosphoglycerate and 3-phosphoglycerate.</text>
</comment>
<comment type="catalytic activity">
    <reaction evidence="1">
        <text>(2R)-2-phosphoglycerate = (2R)-3-phosphoglycerate</text>
        <dbReference type="Rhea" id="RHEA:15901"/>
        <dbReference type="ChEBI" id="CHEBI:58272"/>
        <dbReference type="ChEBI" id="CHEBI:58289"/>
        <dbReference type="EC" id="5.4.2.12"/>
    </reaction>
</comment>
<comment type="cofactor">
    <cofactor evidence="1">
        <name>Mn(2+)</name>
        <dbReference type="ChEBI" id="CHEBI:29035"/>
    </cofactor>
    <text evidence="1">Binds 2 manganese ions per subunit.</text>
</comment>
<comment type="pathway">
    <text evidence="1">Carbohydrate degradation; glycolysis; pyruvate from D-glyceraldehyde 3-phosphate: step 3/5.</text>
</comment>
<comment type="subunit">
    <text evidence="1">Monomer.</text>
</comment>
<comment type="similarity">
    <text evidence="1">Belongs to the BPG-independent phosphoglycerate mutase family.</text>
</comment>
<protein>
    <recommendedName>
        <fullName evidence="1">2,3-bisphosphoglycerate-independent phosphoglycerate mutase</fullName>
        <shortName evidence="1">BPG-independent PGAM</shortName>
        <shortName evidence="1">Phosphoglyceromutase</shortName>
        <shortName evidence="1">iPGM</shortName>
        <ecNumber evidence="1">5.4.2.12</ecNumber>
    </recommendedName>
</protein>
<gene>
    <name evidence="1" type="primary">gpmI</name>
    <name type="ordered locus">ACIAD0256</name>
</gene>
<name>GPMI_ACIAD</name>
<feature type="chain" id="PRO_0000212115" description="2,3-bisphosphoglycerate-independent phosphoglycerate mutase">
    <location>
        <begin position="1"/>
        <end position="515"/>
    </location>
</feature>
<feature type="active site" description="Phosphoserine intermediate" evidence="1">
    <location>
        <position position="67"/>
    </location>
</feature>
<feature type="binding site" evidence="1">
    <location>
        <position position="17"/>
    </location>
    <ligand>
        <name>Mn(2+)</name>
        <dbReference type="ChEBI" id="CHEBI:29035"/>
        <label>2</label>
    </ligand>
</feature>
<feature type="binding site" evidence="1">
    <location>
        <position position="67"/>
    </location>
    <ligand>
        <name>Mn(2+)</name>
        <dbReference type="ChEBI" id="CHEBI:29035"/>
        <label>2</label>
    </ligand>
</feature>
<feature type="binding site" evidence="1">
    <location>
        <position position="128"/>
    </location>
    <ligand>
        <name>substrate</name>
    </ligand>
</feature>
<feature type="binding site" evidence="1">
    <location>
        <begin position="157"/>
        <end position="158"/>
    </location>
    <ligand>
        <name>substrate</name>
    </ligand>
</feature>
<feature type="binding site" evidence="1">
    <location>
        <position position="190"/>
    </location>
    <ligand>
        <name>substrate</name>
    </ligand>
</feature>
<feature type="binding site" evidence="1">
    <location>
        <position position="196"/>
    </location>
    <ligand>
        <name>substrate</name>
    </ligand>
</feature>
<feature type="binding site" evidence="1">
    <location>
        <begin position="262"/>
        <end position="265"/>
    </location>
    <ligand>
        <name>substrate</name>
    </ligand>
</feature>
<feature type="binding site" evidence="1">
    <location>
        <position position="336"/>
    </location>
    <ligand>
        <name>substrate</name>
    </ligand>
</feature>
<feature type="binding site" evidence="1">
    <location>
        <position position="403"/>
    </location>
    <ligand>
        <name>Mn(2+)</name>
        <dbReference type="ChEBI" id="CHEBI:29035"/>
        <label>1</label>
    </ligand>
</feature>
<feature type="binding site" evidence="1">
    <location>
        <position position="407"/>
    </location>
    <ligand>
        <name>Mn(2+)</name>
        <dbReference type="ChEBI" id="CHEBI:29035"/>
        <label>1</label>
    </ligand>
</feature>
<feature type="binding site" evidence="1">
    <location>
        <position position="444"/>
    </location>
    <ligand>
        <name>Mn(2+)</name>
        <dbReference type="ChEBI" id="CHEBI:29035"/>
        <label>2</label>
    </ligand>
</feature>
<feature type="binding site" evidence="1">
    <location>
        <position position="445"/>
    </location>
    <ligand>
        <name>Mn(2+)</name>
        <dbReference type="ChEBI" id="CHEBI:29035"/>
        <label>2</label>
    </ligand>
</feature>
<feature type="binding site" evidence="1">
    <location>
        <position position="463"/>
    </location>
    <ligand>
        <name>Mn(2+)</name>
        <dbReference type="ChEBI" id="CHEBI:29035"/>
        <label>1</label>
    </ligand>
</feature>
<dbReference type="EC" id="5.4.2.12" evidence="1"/>
<dbReference type="EMBL" id="CR543861">
    <property type="protein sequence ID" value="CAG67222.1"/>
    <property type="molecule type" value="Genomic_DNA"/>
</dbReference>
<dbReference type="RefSeq" id="WP_004920731.1">
    <property type="nucleotide sequence ID" value="NC_005966.1"/>
</dbReference>
<dbReference type="SMR" id="Q6FFD5"/>
<dbReference type="STRING" id="202950.GCA_001485005_00531"/>
<dbReference type="GeneID" id="45232771"/>
<dbReference type="KEGG" id="aci:ACIAD0256"/>
<dbReference type="eggNOG" id="COG0696">
    <property type="taxonomic scope" value="Bacteria"/>
</dbReference>
<dbReference type="HOGENOM" id="CLU_026099_2_0_6"/>
<dbReference type="OrthoDB" id="9800863at2"/>
<dbReference type="BioCyc" id="ASP62977:ACIAD_RS01210-MONOMER"/>
<dbReference type="UniPathway" id="UPA00109">
    <property type="reaction ID" value="UER00186"/>
</dbReference>
<dbReference type="Proteomes" id="UP000000430">
    <property type="component" value="Chromosome"/>
</dbReference>
<dbReference type="GO" id="GO:0005829">
    <property type="term" value="C:cytosol"/>
    <property type="evidence" value="ECO:0007669"/>
    <property type="project" value="TreeGrafter"/>
</dbReference>
<dbReference type="GO" id="GO:0030145">
    <property type="term" value="F:manganese ion binding"/>
    <property type="evidence" value="ECO:0007669"/>
    <property type="project" value="UniProtKB-UniRule"/>
</dbReference>
<dbReference type="GO" id="GO:0004619">
    <property type="term" value="F:phosphoglycerate mutase activity"/>
    <property type="evidence" value="ECO:0007669"/>
    <property type="project" value="UniProtKB-EC"/>
</dbReference>
<dbReference type="GO" id="GO:0006007">
    <property type="term" value="P:glucose catabolic process"/>
    <property type="evidence" value="ECO:0007669"/>
    <property type="project" value="InterPro"/>
</dbReference>
<dbReference type="GO" id="GO:0006096">
    <property type="term" value="P:glycolytic process"/>
    <property type="evidence" value="ECO:0007669"/>
    <property type="project" value="UniProtKB-UniRule"/>
</dbReference>
<dbReference type="CDD" id="cd16010">
    <property type="entry name" value="iPGM"/>
    <property type="match status" value="1"/>
</dbReference>
<dbReference type="FunFam" id="3.40.1450.10:FF:000001">
    <property type="entry name" value="2,3-bisphosphoglycerate-independent phosphoglycerate mutase"/>
    <property type="match status" value="1"/>
</dbReference>
<dbReference type="Gene3D" id="3.40.720.10">
    <property type="entry name" value="Alkaline Phosphatase, subunit A"/>
    <property type="match status" value="1"/>
</dbReference>
<dbReference type="Gene3D" id="3.40.1450.10">
    <property type="entry name" value="BPG-independent phosphoglycerate mutase, domain B"/>
    <property type="match status" value="1"/>
</dbReference>
<dbReference type="HAMAP" id="MF_01038">
    <property type="entry name" value="GpmI"/>
    <property type="match status" value="1"/>
</dbReference>
<dbReference type="InterPro" id="IPR017850">
    <property type="entry name" value="Alkaline_phosphatase_core_sf"/>
</dbReference>
<dbReference type="InterPro" id="IPR011258">
    <property type="entry name" value="BPG-indep_PGM_N"/>
</dbReference>
<dbReference type="InterPro" id="IPR006124">
    <property type="entry name" value="Metalloenzyme"/>
</dbReference>
<dbReference type="InterPro" id="IPR036646">
    <property type="entry name" value="PGAM_B_sf"/>
</dbReference>
<dbReference type="InterPro" id="IPR005995">
    <property type="entry name" value="Pgm_bpd_ind"/>
</dbReference>
<dbReference type="NCBIfam" id="TIGR01307">
    <property type="entry name" value="pgm_bpd_ind"/>
    <property type="match status" value="1"/>
</dbReference>
<dbReference type="PANTHER" id="PTHR31637">
    <property type="entry name" value="2,3-BISPHOSPHOGLYCERATE-INDEPENDENT PHOSPHOGLYCERATE MUTASE"/>
    <property type="match status" value="1"/>
</dbReference>
<dbReference type="PANTHER" id="PTHR31637:SF0">
    <property type="entry name" value="2,3-BISPHOSPHOGLYCERATE-INDEPENDENT PHOSPHOGLYCERATE MUTASE"/>
    <property type="match status" value="1"/>
</dbReference>
<dbReference type="Pfam" id="PF06415">
    <property type="entry name" value="iPGM_N"/>
    <property type="match status" value="1"/>
</dbReference>
<dbReference type="Pfam" id="PF01676">
    <property type="entry name" value="Metalloenzyme"/>
    <property type="match status" value="1"/>
</dbReference>
<dbReference type="PIRSF" id="PIRSF001492">
    <property type="entry name" value="IPGAM"/>
    <property type="match status" value="1"/>
</dbReference>
<dbReference type="SUPFAM" id="SSF64158">
    <property type="entry name" value="2,3-Bisphosphoglycerate-independent phosphoglycerate mutase, substrate-binding domain"/>
    <property type="match status" value="1"/>
</dbReference>
<dbReference type="SUPFAM" id="SSF53649">
    <property type="entry name" value="Alkaline phosphatase-like"/>
    <property type="match status" value="1"/>
</dbReference>
<proteinExistence type="inferred from homology"/>
<evidence type="ECO:0000255" key="1">
    <source>
        <dbReference type="HAMAP-Rule" id="MF_01038"/>
    </source>
</evidence>
<organism>
    <name type="scientific">Acinetobacter baylyi (strain ATCC 33305 / BD413 / ADP1)</name>
    <dbReference type="NCBI Taxonomy" id="62977"/>
    <lineage>
        <taxon>Bacteria</taxon>
        <taxon>Pseudomonadati</taxon>
        <taxon>Pseudomonadota</taxon>
        <taxon>Gammaproteobacteria</taxon>
        <taxon>Moraxellales</taxon>
        <taxon>Moraxellaceae</taxon>
        <taxon>Acinetobacter</taxon>
    </lineage>
</organism>
<sequence>MTDATVAKIPHVLVIMDGIGHREAIKDNAFLAAKTPSLSMMKQKHPHSLISGSGEDVGLPDGQMGNSEVGHMNLGAGRVLYQDFTRITKDIRDGVFFEHEVLVDAVEKAKAVHGAVHIMGLLSEGGVHSHEDHIVAMCELALKRGATVYLHAFLDGRDTPPKSAQPSLEKLDALFAQYPEQGRIVSMIGRYFAMDRDNRWDRVEQAYRLLTESEAVRTAQSAVQGLELAYAAGESDEFVKATRIGDAVAVQDGDSIVFMNFRADRARELTRAFVEHDFSGFTRQRIPHLSKFVMLTRYQATIDAPVAYMPEALHNSIGEYLSNLGKTQLRIAETEKYAHVTFFFSGGREDEYPGEKRILIPSPNVATYDLKPEMSAYEVTDQLVNAIDSGEFDLLVVNYANGDMVGHTGIFDAAVKAVEAVDTCLGRVYQAVMAKHGHMIITADHGNVEQMQDYQSGQVHTQHTTELVPFIYVGPTQAVIAEGGVLADVAPTLLNLMQLPVPAEMQGRNLITLSS</sequence>
<reference key="1">
    <citation type="journal article" date="2004" name="Nucleic Acids Res.">
        <title>Unique features revealed by the genome sequence of Acinetobacter sp. ADP1, a versatile and naturally transformation competent bacterium.</title>
        <authorList>
            <person name="Barbe V."/>
            <person name="Vallenet D."/>
            <person name="Fonknechten N."/>
            <person name="Kreimeyer A."/>
            <person name="Oztas S."/>
            <person name="Labarre L."/>
            <person name="Cruveiller S."/>
            <person name="Robert C."/>
            <person name="Duprat S."/>
            <person name="Wincker P."/>
            <person name="Ornston L.N."/>
            <person name="Weissenbach J."/>
            <person name="Marliere P."/>
            <person name="Cohen G.N."/>
            <person name="Medigue C."/>
        </authorList>
    </citation>
    <scope>NUCLEOTIDE SEQUENCE [LARGE SCALE GENOMIC DNA]</scope>
    <source>
        <strain>ATCC 33305 / BD413 / ADP1</strain>
    </source>
</reference>
<accession>Q6FFD5</accession>